<reference key="1">
    <citation type="journal article" date="2005" name="J. Bacteriol.">
        <title>Insights into genome plasticity and pathogenicity of the plant pathogenic Bacterium Xanthomonas campestris pv. vesicatoria revealed by the complete genome sequence.</title>
        <authorList>
            <person name="Thieme F."/>
            <person name="Koebnik R."/>
            <person name="Bekel T."/>
            <person name="Berger C."/>
            <person name="Boch J."/>
            <person name="Buettner D."/>
            <person name="Caldana C."/>
            <person name="Gaigalat L."/>
            <person name="Goesmann A."/>
            <person name="Kay S."/>
            <person name="Kirchner O."/>
            <person name="Lanz C."/>
            <person name="Linke B."/>
            <person name="McHardy A.C."/>
            <person name="Meyer F."/>
            <person name="Mittenhuber G."/>
            <person name="Nies D.H."/>
            <person name="Niesbach-Kloesgen U."/>
            <person name="Patschkowski T."/>
            <person name="Rueckert C."/>
            <person name="Rupp O."/>
            <person name="Schneiker S."/>
            <person name="Schuster S.C."/>
            <person name="Vorhoelter F.J."/>
            <person name="Weber E."/>
            <person name="Puehler A."/>
            <person name="Bonas U."/>
            <person name="Bartels D."/>
            <person name="Kaiser O."/>
        </authorList>
    </citation>
    <scope>NUCLEOTIDE SEQUENCE [LARGE SCALE GENOMIC DNA]</scope>
    <source>
        <strain>85-10</strain>
    </source>
</reference>
<sequence length="302" mass="34362">MSDSRRVPITFQGLIQTLNQYWAEQGCVLIQPLDLEVGAGTFHPATFLRALGPEPWNAAYVQPSRRPTDGRYGENPNRLQRYYQYQVAMKPNPDNIQDLYLGSLQALGIDPLVHDLRFVEDNWESPTLGAWGLGWEVWLNGMEVTQFTYFQQAGGLECKPVLGEITYGLERLCMYLQSCDNVYELVWTYGPDGAAVTYGDVYHQNEVEQSTYNFEHANVAELFHRFDACEAEARHLVEVGLPLPAYEQVTKASHAFNLLDARRAISVTERQRYILRVRALAQGVAQAYYAQREKLGFPGVKK</sequence>
<protein>
    <recommendedName>
        <fullName evidence="1">Glycine--tRNA ligase alpha subunit</fullName>
        <ecNumber evidence="1">6.1.1.14</ecNumber>
    </recommendedName>
    <alternativeName>
        <fullName evidence="1">Glycyl-tRNA synthetase alpha subunit</fullName>
        <shortName evidence="1">GlyRS</shortName>
    </alternativeName>
</protein>
<accession>Q3BMH1</accession>
<gene>
    <name evidence="1" type="primary">glyQ</name>
    <name type="ordered locus">XCV4311</name>
</gene>
<feature type="chain" id="PRO_1000047529" description="Glycine--tRNA ligase alpha subunit">
    <location>
        <begin position="1"/>
        <end position="302"/>
    </location>
</feature>
<name>SYGA_XANE5</name>
<comment type="catalytic activity">
    <reaction evidence="1">
        <text>tRNA(Gly) + glycine + ATP = glycyl-tRNA(Gly) + AMP + diphosphate</text>
        <dbReference type="Rhea" id="RHEA:16013"/>
        <dbReference type="Rhea" id="RHEA-COMP:9664"/>
        <dbReference type="Rhea" id="RHEA-COMP:9683"/>
        <dbReference type="ChEBI" id="CHEBI:30616"/>
        <dbReference type="ChEBI" id="CHEBI:33019"/>
        <dbReference type="ChEBI" id="CHEBI:57305"/>
        <dbReference type="ChEBI" id="CHEBI:78442"/>
        <dbReference type="ChEBI" id="CHEBI:78522"/>
        <dbReference type="ChEBI" id="CHEBI:456215"/>
        <dbReference type="EC" id="6.1.1.14"/>
    </reaction>
</comment>
<comment type="subunit">
    <text evidence="1">Tetramer of two alpha and two beta subunits.</text>
</comment>
<comment type="subcellular location">
    <subcellularLocation>
        <location evidence="1">Cytoplasm</location>
    </subcellularLocation>
</comment>
<comment type="similarity">
    <text evidence="1">Belongs to the class-II aminoacyl-tRNA synthetase family.</text>
</comment>
<dbReference type="EC" id="6.1.1.14" evidence="1"/>
<dbReference type="EMBL" id="AM039952">
    <property type="protein sequence ID" value="CAJ26042.1"/>
    <property type="molecule type" value="Genomic_DNA"/>
</dbReference>
<dbReference type="RefSeq" id="WP_008577775.1">
    <property type="nucleotide sequence ID" value="NZ_CP017190.1"/>
</dbReference>
<dbReference type="SMR" id="Q3BMH1"/>
<dbReference type="STRING" id="456327.BJD11_23835"/>
<dbReference type="GeneID" id="97512352"/>
<dbReference type="KEGG" id="xcv:XCV4311"/>
<dbReference type="eggNOG" id="COG0752">
    <property type="taxonomic scope" value="Bacteria"/>
</dbReference>
<dbReference type="HOGENOM" id="CLU_057066_1_0_6"/>
<dbReference type="Proteomes" id="UP000007069">
    <property type="component" value="Chromosome"/>
</dbReference>
<dbReference type="GO" id="GO:0005829">
    <property type="term" value="C:cytosol"/>
    <property type="evidence" value="ECO:0007669"/>
    <property type="project" value="TreeGrafter"/>
</dbReference>
<dbReference type="GO" id="GO:0005524">
    <property type="term" value="F:ATP binding"/>
    <property type="evidence" value="ECO:0007669"/>
    <property type="project" value="UniProtKB-UniRule"/>
</dbReference>
<dbReference type="GO" id="GO:0004820">
    <property type="term" value="F:glycine-tRNA ligase activity"/>
    <property type="evidence" value="ECO:0007669"/>
    <property type="project" value="UniProtKB-UniRule"/>
</dbReference>
<dbReference type="GO" id="GO:0006426">
    <property type="term" value="P:glycyl-tRNA aminoacylation"/>
    <property type="evidence" value="ECO:0007669"/>
    <property type="project" value="UniProtKB-UniRule"/>
</dbReference>
<dbReference type="CDD" id="cd00733">
    <property type="entry name" value="GlyRS_alpha_core"/>
    <property type="match status" value="1"/>
</dbReference>
<dbReference type="FunFam" id="3.30.930.10:FF:000006">
    <property type="entry name" value="Glycine--tRNA ligase alpha subunit"/>
    <property type="match status" value="1"/>
</dbReference>
<dbReference type="Gene3D" id="3.30.930.10">
    <property type="entry name" value="Bira Bifunctional Protein, Domain 2"/>
    <property type="match status" value="1"/>
</dbReference>
<dbReference type="Gene3D" id="1.20.58.180">
    <property type="entry name" value="Class II aaRS and biotin synthetases, domain 2"/>
    <property type="match status" value="1"/>
</dbReference>
<dbReference type="HAMAP" id="MF_00254">
    <property type="entry name" value="Gly_tRNA_synth_alpha"/>
    <property type="match status" value="1"/>
</dbReference>
<dbReference type="InterPro" id="IPR045864">
    <property type="entry name" value="aa-tRNA-synth_II/BPL/LPL"/>
</dbReference>
<dbReference type="InterPro" id="IPR006194">
    <property type="entry name" value="Gly-tRNA-synth_heterodimer"/>
</dbReference>
<dbReference type="InterPro" id="IPR002310">
    <property type="entry name" value="Gly-tRNA_ligase_asu"/>
</dbReference>
<dbReference type="NCBIfam" id="TIGR00388">
    <property type="entry name" value="glyQ"/>
    <property type="match status" value="1"/>
</dbReference>
<dbReference type="NCBIfam" id="NF006827">
    <property type="entry name" value="PRK09348.1"/>
    <property type="match status" value="1"/>
</dbReference>
<dbReference type="PANTHER" id="PTHR30075:SF2">
    <property type="entry name" value="GLYCINE--TRNA LIGASE, CHLOROPLASTIC_MITOCHONDRIAL 2"/>
    <property type="match status" value="1"/>
</dbReference>
<dbReference type="PANTHER" id="PTHR30075">
    <property type="entry name" value="GLYCYL-TRNA SYNTHETASE"/>
    <property type="match status" value="1"/>
</dbReference>
<dbReference type="Pfam" id="PF02091">
    <property type="entry name" value="tRNA-synt_2e"/>
    <property type="match status" value="1"/>
</dbReference>
<dbReference type="PRINTS" id="PR01044">
    <property type="entry name" value="TRNASYNTHGA"/>
</dbReference>
<dbReference type="SUPFAM" id="SSF55681">
    <property type="entry name" value="Class II aaRS and biotin synthetases"/>
    <property type="match status" value="1"/>
</dbReference>
<dbReference type="PROSITE" id="PS50861">
    <property type="entry name" value="AA_TRNA_LIGASE_II_GLYAB"/>
    <property type="match status" value="1"/>
</dbReference>
<evidence type="ECO:0000255" key="1">
    <source>
        <dbReference type="HAMAP-Rule" id="MF_00254"/>
    </source>
</evidence>
<organism>
    <name type="scientific">Xanthomonas euvesicatoria pv. vesicatoria (strain 85-10)</name>
    <name type="common">Xanthomonas campestris pv. vesicatoria</name>
    <dbReference type="NCBI Taxonomy" id="316273"/>
    <lineage>
        <taxon>Bacteria</taxon>
        <taxon>Pseudomonadati</taxon>
        <taxon>Pseudomonadota</taxon>
        <taxon>Gammaproteobacteria</taxon>
        <taxon>Lysobacterales</taxon>
        <taxon>Lysobacteraceae</taxon>
        <taxon>Xanthomonas</taxon>
    </lineage>
</organism>
<keyword id="KW-0030">Aminoacyl-tRNA synthetase</keyword>
<keyword id="KW-0067">ATP-binding</keyword>
<keyword id="KW-0963">Cytoplasm</keyword>
<keyword id="KW-0436">Ligase</keyword>
<keyword id="KW-0547">Nucleotide-binding</keyword>
<keyword id="KW-0648">Protein biosynthesis</keyword>
<proteinExistence type="inferred from homology"/>